<sequence>MKDSGDSKDQQLMVALRVRPISVAELEEGATLIAHKVDEQMVVLMDPMEDPDDILRAHRSREKSYLFDVAFDFTATQEMVYQATTKSLIEGVISGYNATVFAYGPTGCGKTYTMLGTDQEPGIYVQTLNDLFRAIEETSNDMEYEVSMSYLEIYNEMIRDLLNPSLGYLELREDSKGVIQVAGITEVSTINAKEIMQLLMKGNRQRTQEPTAANQTSSRSHAVLQVTVRQRSRVKNILQEVRQGRLFMIDLAGSERASQTQNRGQRMKEGAHINRSLLALGNCINALSDKGSNKYINYRDSKLTRLLKDSLGGNSRTVMIAHISPASSAFEESRNTLTYAGRAKNIKTRVKQNLLNVSYHIAQYTSIIADLRGEIQRLKRKIDEQTGRGQARGRQDRGDIRHIQAEVQLHSGQGEKAGMGQLREQLASAFQEQMDVRRRLLELENRAMEVQIDTSRHLLTIAGWKHEKSRRALKWREEQRKECYAKDDSEKDSDTGDDQPDILEPPEVAAARESIAALVDEQKQLRKQKLALEQRCRELRARGRRLEETLPRRIGSEEQREVLSLLCRVHELEVENTEMQSHALLRDGALRHRHEAVRRLEQHRSLCDEIIQGQRQIIDDYNLAVPQRLEELYEVYLRELEEGSLEQATIMDQVASRALQDSSLPKITPAGTSLTPDSDLESVKTLSSDAQHLQNSALPPLSTESEGHHVFKAGTGAWQAKSSSVPTPPPIQLGSLVTQEAPAQDSLGSWINSSPDSSENLSEIPLSHKERKEILTGTKCIWVKAARRRSRALGTEGRHLLAPATERSSLSLHSLSEGDDARPPGPLACKRPPSPTLQHAASEDNLSSSTGEAPSRAVGHHGDGPRPWLRGQKKSLGKKREESLEAKRRKRRSRSFEVTGQGLSHPKTHLLGPHQAERISDHRMPVCRHPAPGIRHLGKVTLPLAKVKLPPSQNTGPGDSSPLAVPPNPGGGSRRATRGPRLPHGTSTHGKDGCSRHN</sequence>
<reference key="1">
    <citation type="journal article" date="2004" name="Nat. Genet.">
        <title>Complete sequencing and characterization of 21,243 full-length human cDNAs.</title>
        <authorList>
            <person name="Ota T."/>
            <person name="Suzuki Y."/>
            <person name="Nishikawa T."/>
            <person name="Otsuki T."/>
            <person name="Sugiyama T."/>
            <person name="Irie R."/>
            <person name="Wakamatsu A."/>
            <person name="Hayashi K."/>
            <person name="Sato H."/>
            <person name="Nagai K."/>
            <person name="Kimura K."/>
            <person name="Makita H."/>
            <person name="Sekine M."/>
            <person name="Obayashi M."/>
            <person name="Nishi T."/>
            <person name="Shibahara T."/>
            <person name="Tanaka T."/>
            <person name="Ishii S."/>
            <person name="Yamamoto J."/>
            <person name="Saito K."/>
            <person name="Kawai Y."/>
            <person name="Isono Y."/>
            <person name="Nakamura Y."/>
            <person name="Nagahari K."/>
            <person name="Murakami K."/>
            <person name="Yasuda T."/>
            <person name="Iwayanagi T."/>
            <person name="Wagatsuma M."/>
            <person name="Shiratori A."/>
            <person name="Sudo H."/>
            <person name="Hosoiri T."/>
            <person name="Kaku Y."/>
            <person name="Kodaira H."/>
            <person name="Kondo H."/>
            <person name="Sugawara M."/>
            <person name="Takahashi M."/>
            <person name="Kanda K."/>
            <person name="Yokoi T."/>
            <person name="Furuya T."/>
            <person name="Kikkawa E."/>
            <person name="Omura Y."/>
            <person name="Abe K."/>
            <person name="Kamihara K."/>
            <person name="Katsuta N."/>
            <person name="Sato K."/>
            <person name="Tanikawa M."/>
            <person name="Yamazaki M."/>
            <person name="Ninomiya K."/>
            <person name="Ishibashi T."/>
            <person name="Yamashita H."/>
            <person name="Murakawa K."/>
            <person name="Fujimori K."/>
            <person name="Tanai H."/>
            <person name="Kimata M."/>
            <person name="Watanabe M."/>
            <person name="Hiraoka S."/>
            <person name="Chiba Y."/>
            <person name="Ishida S."/>
            <person name="Ono Y."/>
            <person name="Takiguchi S."/>
            <person name="Watanabe S."/>
            <person name="Yosida M."/>
            <person name="Hotuta T."/>
            <person name="Kusano J."/>
            <person name="Kanehori K."/>
            <person name="Takahashi-Fujii A."/>
            <person name="Hara H."/>
            <person name="Tanase T.-O."/>
            <person name="Nomura Y."/>
            <person name="Togiya S."/>
            <person name="Komai F."/>
            <person name="Hara R."/>
            <person name="Takeuchi K."/>
            <person name="Arita M."/>
            <person name="Imose N."/>
            <person name="Musashino K."/>
            <person name="Yuuki H."/>
            <person name="Oshima A."/>
            <person name="Sasaki N."/>
            <person name="Aotsuka S."/>
            <person name="Yoshikawa Y."/>
            <person name="Matsunawa H."/>
            <person name="Ichihara T."/>
            <person name="Shiohata N."/>
            <person name="Sano S."/>
            <person name="Moriya S."/>
            <person name="Momiyama H."/>
            <person name="Satoh N."/>
            <person name="Takami S."/>
            <person name="Terashima Y."/>
            <person name="Suzuki O."/>
            <person name="Nakagawa S."/>
            <person name="Senoh A."/>
            <person name="Mizoguchi H."/>
            <person name="Goto Y."/>
            <person name="Shimizu F."/>
            <person name="Wakebe H."/>
            <person name="Hishigaki H."/>
            <person name="Watanabe T."/>
            <person name="Sugiyama A."/>
            <person name="Takemoto M."/>
            <person name="Kawakami B."/>
            <person name="Yamazaki M."/>
            <person name="Watanabe K."/>
            <person name="Kumagai A."/>
            <person name="Itakura S."/>
            <person name="Fukuzumi Y."/>
            <person name="Fujimori Y."/>
            <person name="Komiyama M."/>
            <person name="Tashiro H."/>
            <person name="Tanigami A."/>
            <person name="Fujiwara T."/>
            <person name="Ono T."/>
            <person name="Yamada K."/>
            <person name="Fujii Y."/>
            <person name="Ozaki K."/>
            <person name="Hirao M."/>
            <person name="Ohmori Y."/>
            <person name="Kawabata A."/>
            <person name="Hikiji T."/>
            <person name="Kobatake N."/>
            <person name="Inagaki H."/>
            <person name="Ikema Y."/>
            <person name="Okamoto S."/>
            <person name="Okitani R."/>
            <person name="Kawakami T."/>
            <person name="Noguchi S."/>
            <person name="Itoh T."/>
            <person name="Shigeta K."/>
            <person name="Senba T."/>
            <person name="Matsumura K."/>
            <person name="Nakajima Y."/>
            <person name="Mizuno T."/>
            <person name="Morinaga M."/>
            <person name="Sasaki M."/>
            <person name="Togashi T."/>
            <person name="Oyama M."/>
            <person name="Hata H."/>
            <person name="Watanabe M."/>
            <person name="Komatsu T."/>
            <person name="Mizushima-Sugano J."/>
            <person name="Satoh T."/>
            <person name="Shirai Y."/>
            <person name="Takahashi Y."/>
            <person name="Nakagawa K."/>
            <person name="Okumura K."/>
            <person name="Nagase T."/>
            <person name="Nomura N."/>
            <person name="Kikuchi H."/>
            <person name="Masuho Y."/>
            <person name="Yamashita R."/>
            <person name="Nakai K."/>
            <person name="Yada T."/>
            <person name="Nakamura Y."/>
            <person name="Ohara O."/>
            <person name="Isogai T."/>
            <person name="Sugano S."/>
        </authorList>
    </citation>
    <scope>NUCLEOTIDE SEQUENCE [LARGE SCALE MRNA] (ISOFORM 2)</scope>
    <scope>VARIANT TRP-471</scope>
    <source>
        <tissue>Amygdala</tissue>
    </source>
</reference>
<reference key="2">
    <citation type="journal article" date="2006" name="Nature">
        <title>DNA sequence of human chromosome 17 and analysis of rearrangement in the human lineage.</title>
        <authorList>
            <person name="Zody M.C."/>
            <person name="Garber M."/>
            <person name="Adams D.J."/>
            <person name="Sharpe T."/>
            <person name="Harrow J."/>
            <person name="Lupski J.R."/>
            <person name="Nicholson C."/>
            <person name="Searle S.M."/>
            <person name="Wilming L."/>
            <person name="Young S.K."/>
            <person name="Abouelleil A."/>
            <person name="Allen N.R."/>
            <person name="Bi W."/>
            <person name="Bloom T."/>
            <person name="Borowsky M.L."/>
            <person name="Bugalter B.E."/>
            <person name="Butler J."/>
            <person name="Chang J.L."/>
            <person name="Chen C.-K."/>
            <person name="Cook A."/>
            <person name="Corum B."/>
            <person name="Cuomo C.A."/>
            <person name="de Jong P.J."/>
            <person name="DeCaprio D."/>
            <person name="Dewar K."/>
            <person name="FitzGerald M."/>
            <person name="Gilbert J."/>
            <person name="Gibson R."/>
            <person name="Gnerre S."/>
            <person name="Goldstein S."/>
            <person name="Grafham D.V."/>
            <person name="Grocock R."/>
            <person name="Hafez N."/>
            <person name="Hagopian D.S."/>
            <person name="Hart E."/>
            <person name="Norman C.H."/>
            <person name="Humphray S."/>
            <person name="Jaffe D.B."/>
            <person name="Jones M."/>
            <person name="Kamal M."/>
            <person name="Khodiyar V.K."/>
            <person name="LaButti K."/>
            <person name="Laird G."/>
            <person name="Lehoczky J."/>
            <person name="Liu X."/>
            <person name="Lokyitsang T."/>
            <person name="Loveland J."/>
            <person name="Lui A."/>
            <person name="Macdonald P."/>
            <person name="Major J.E."/>
            <person name="Matthews L."/>
            <person name="Mauceli E."/>
            <person name="McCarroll S.A."/>
            <person name="Mihalev A.H."/>
            <person name="Mudge J."/>
            <person name="Nguyen C."/>
            <person name="Nicol R."/>
            <person name="O'Leary S.B."/>
            <person name="Osoegawa K."/>
            <person name="Schwartz D.C."/>
            <person name="Shaw-Smith C."/>
            <person name="Stankiewicz P."/>
            <person name="Steward C."/>
            <person name="Swarbreck D."/>
            <person name="Venkataraman V."/>
            <person name="Whittaker C.A."/>
            <person name="Yang X."/>
            <person name="Zimmer A.R."/>
            <person name="Bradley A."/>
            <person name="Hubbard T."/>
            <person name="Birren B.W."/>
            <person name="Rogers J."/>
            <person name="Lander E.S."/>
            <person name="Nusbaum C."/>
        </authorList>
    </citation>
    <scope>NUCLEOTIDE SEQUENCE [LARGE SCALE GENOMIC DNA]</scope>
</reference>
<reference key="3">
    <citation type="submission" date="2005-07" db="EMBL/GenBank/DDBJ databases">
        <authorList>
            <person name="Mural R.J."/>
            <person name="Istrail S."/>
            <person name="Sutton G.G."/>
            <person name="Florea L."/>
            <person name="Halpern A.L."/>
            <person name="Mobarry C.M."/>
            <person name="Lippert R."/>
            <person name="Walenz B."/>
            <person name="Shatkay H."/>
            <person name="Dew I."/>
            <person name="Miller J.R."/>
            <person name="Flanigan M.J."/>
            <person name="Edwards N.J."/>
            <person name="Bolanos R."/>
            <person name="Fasulo D."/>
            <person name="Halldorsson B.V."/>
            <person name="Hannenhalli S."/>
            <person name="Turner R."/>
            <person name="Yooseph S."/>
            <person name="Lu F."/>
            <person name="Nusskern D.R."/>
            <person name="Shue B.C."/>
            <person name="Zheng X.H."/>
            <person name="Zhong F."/>
            <person name="Delcher A.L."/>
            <person name="Huson D.H."/>
            <person name="Kravitz S.A."/>
            <person name="Mouchard L."/>
            <person name="Reinert K."/>
            <person name="Remington K.A."/>
            <person name="Clark A.G."/>
            <person name="Waterman M.S."/>
            <person name="Eichler E.E."/>
            <person name="Adams M.D."/>
            <person name="Hunkapiller M.W."/>
            <person name="Myers E.W."/>
            <person name="Venter J.C."/>
        </authorList>
    </citation>
    <scope>NUCLEOTIDE SEQUENCE [LARGE SCALE GENOMIC DNA]</scope>
</reference>
<reference key="4">
    <citation type="journal article" date="2004" name="Genome Res.">
        <title>The status, quality, and expansion of the NIH full-length cDNA project: the Mammalian Gene Collection (MGC).</title>
        <authorList>
            <consortium name="The MGC Project Team"/>
        </authorList>
    </citation>
    <scope>NUCLEOTIDE SEQUENCE [LARGE SCALE MRNA] (ISOFORMS 2 AND 3)</scope>
    <scope>NUCLEOTIDE SEQUENCE [LARGE SCALE MRNA] OF 1-829 (ISOFORM 1)</scope>
    <source>
        <tissue>Liver</tissue>
    </source>
</reference>
<organism>
    <name type="scientific">Homo sapiens</name>
    <name type="common">Human</name>
    <dbReference type="NCBI Taxonomy" id="9606"/>
    <lineage>
        <taxon>Eukaryota</taxon>
        <taxon>Metazoa</taxon>
        <taxon>Chordata</taxon>
        <taxon>Craniata</taxon>
        <taxon>Vertebrata</taxon>
        <taxon>Euteleostomi</taxon>
        <taxon>Mammalia</taxon>
        <taxon>Eutheria</taxon>
        <taxon>Euarchontoglires</taxon>
        <taxon>Primates</taxon>
        <taxon>Haplorrhini</taxon>
        <taxon>Catarrhini</taxon>
        <taxon>Hominidae</taxon>
        <taxon>Homo</taxon>
    </lineage>
</organism>
<gene>
    <name type="primary">KIF19</name>
</gene>
<feature type="chain" id="PRO_0000278245" description="Kinesin-like protein KIF19">
    <location>
        <begin position="1"/>
        <end position="998"/>
    </location>
</feature>
<feature type="domain" description="Kinesin motor" evidence="3">
    <location>
        <begin position="11"/>
        <end position="346"/>
    </location>
</feature>
<feature type="region of interest" description="Disordered" evidence="4">
    <location>
        <begin position="482"/>
        <end position="503"/>
    </location>
</feature>
<feature type="region of interest" description="Disordered" evidence="4">
    <location>
        <begin position="662"/>
        <end position="706"/>
    </location>
</feature>
<feature type="region of interest" description="Disordered" evidence="4">
    <location>
        <begin position="746"/>
        <end position="765"/>
    </location>
</feature>
<feature type="region of interest" description="Disordered" evidence="4">
    <location>
        <begin position="794"/>
        <end position="911"/>
    </location>
</feature>
<feature type="region of interest" description="Disordered" evidence="4">
    <location>
        <begin position="948"/>
        <end position="998"/>
    </location>
</feature>
<feature type="coiled-coil region" evidence="2">
    <location>
        <begin position="360"/>
        <end position="391"/>
    </location>
</feature>
<feature type="coiled-coil region" evidence="2">
    <location>
        <begin position="424"/>
        <end position="452"/>
    </location>
</feature>
<feature type="coiled-coil region" evidence="2">
    <location>
        <begin position="507"/>
        <end position="552"/>
    </location>
</feature>
<feature type="compositionally biased region" description="Basic and acidic residues" evidence="4">
    <location>
        <begin position="482"/>
        <end position="494"/>
    </location>
</feature>
<feature type="compositionally biased region" description="Polar residues" evidence="4">
    <location>
        <begin position="662"/>
        <end position="676"/>
    </location>
</feature>
<feature type="compositionally biased region" description="Polar residues" evidence="4">
    <location>
        <begin position="684"/>
        <end position="697"/>
    </location>
</feature>
<feature type="compositionally biased region" description="Polar residues" evidence="4">
    <location>
        <begin position="746"/>
        <end position="761"/>
    </location>
</feature>
<feature type="compositionally biased region" description="Polar residues" evidence="4">
    <location>
        <begin position="836"/>
        <end position="852"/>
    </location>
</feature>
<feature type="compositionally biased region" description="Basic and acidic residues" evidence="4">
    <location>
        <begin position="989"/>
        <end position="998"/>
    </location>
</feature>
<feature type="binding site" evidence="3">
    <location>
        <begin position="104"/>
        <end position="111"/>
    </location>
    <ligand>
        <name>ATP</name>
        <dbReference type="ChEBI" id="CHEBI:30616"/>
    </ligand>
</feature>
<feature type="splice variant" id="VSP_023207" description="In isoform 3." evidence="7">
    <location>
        <begin position="152"/>
        <end position="193"/>
    </location>
</feature>
<feature type="splice variant" id="VSP_023208" description="In isoform 2 and isoform 3." evidence="6 7">
    <original>LALEQRCRELRARGRRLEE</original>
    <variation>VSRVWGDKESGFRGQGEQV</variation>
    <location>
        <begin position="530"/>
        <end position="548"/>
    </location>
</feature>
<feature type="splice variant" id="VSP_023209" description="In isoform 2 and isoform 3." evidence="6 7">
    <location>
        <begin position="549"/>
        <end position="998"/>
    </location>
</feature>
<feature type="sequence variant" id="VAR_030719" description="In dbSNP:rs2382644." evidence="5">
    <original>R</original>
    <variation>W</variation>
    <location>
        <position position="471"/>
    </location>
</feature>
<feature type="sequence variant" id="VAR_059371" description="In dbSNP:rs2271535.">
    <original>R</original>
    <variation>H</variation>
    <location>
        <position position="807"/>
    </location>
</feature>
<feature type="sequence variant" id="VAR_049703" description="In dbSNP:rs9891620.">
    <original>L</original>
    <variation>P</variation>
    <location>
        <position position="937"/>
    </location>
</feature>
<feature type="sequence variant" id="VAR_061283" description="In dbSNP:rs9675190.">
    <original>R</original>
    <variation>Q</variation>
    <location>
        <position position="974"/>
    </location>
</feature>
<accession>Q2TAC6</accession>
<accession>A6NLG2</accession>
<accession>B7ZKR1</accession>
<accession>Q52M87</accession>
<accession>Q8N1X8</accession>
<accession>Q8TAB6</accession>
<keyword id="KW-0025">Alternative splicing</keyword>
<keyword id="KW-0067">ATP-binding</keyword>
<keyword id="KW-0966">Cell projection</keyword>
<keyword id="KW-0969">Cilium</keyword>
<keyword id="KW-0175">Coiled coil</keyword>
<keyword id="KW-0963">Cytoplasm</keyword>
<keyword id="KW-0206">Cytoskeleton</keyword>
<keyword id="KW-0493">Microtubule</keyword>
<keyword id="KW-0505">Motor protein</keyword>
<keyword id="KW-0547">Nucleotide-binding</keyword>
<keyword id="KW-1267">Proteomics identification</keyword>
<keyword id="KW-1185">Reference proteome</keyword>
<protein>
    <recommendedName>
        <fullName>Kinesin-like protein KIF19</fullName>
    </recommendedName>
</protein>
<proteinExistence type="evidence at protein level"/>
<comment type="function">
    <text evidence="1">Plus end-directed microtubule-dependent motor protein that regulates the length of motile cilia by mediating depolymerization of microtubules at ciliary tips.</text>
</comment>
<comment type="subcellular location">
    <subcellularLocation>
        <location evidence="1">Cytoplasm</location>
        <location evidence="1">Cytoskeleton</location>
    </subcellularLocation>
    <subcellularLocation>
        <location evidence="1">Cell projection</location>
        <location evidence="1">Cilium</location>
    </subcellularLocation>
    <text evidence="1">Localizes to cilia tips.</text>
</comment>
<comment type="alternative products">
    <event type="alternative splicing"/>
    <isoform>
        <id>Q2TAC6-1</id>
        <name>1</name>
        <sequence type="displayed"/>
    </isoform>
    <isoform>
        <id>Q2TAC6-2</id>
        <name>2</name>
        <sequence type="described" ref="VSP_023208 VSP_023209"/>
    </isoform>
    <isoform>
        <id>Q2TAC6-3</id>
        <name>3</name>
        <sequence type="described" ref="VSP_023207 VSP_023208 VSP_023209"/>
    </isoform>
</comment>
<comment type="miscellaneous">
    <molecule>Isoform 2</molecule>
    <text evidence="8">Due to intron retention.</text>
</comment>
<comment type="miscellaneous">
    <molecule>Isoform 3</molecule>
    <text evidence="8">Due to intron retention.</text>
</comment>
<comment type="similarity">
    <text evidence="3">Belongs to the TRAFAC class myosin-kinesin ATPase superfamily. Kinesin family.</text>
</comment>
<name>KIF19_HUMAN</name>
<evidence type="ECO:0000250" key="1"/>
<evidence type="ECO:0000255" key="2"/>
<evidence type="ECO:0000255" key="3">
    <source>
        <dbReference type="PROSITE-ProRule" id="PRU00283"/>
    </source>
</evidence>
<evidence type="ECO:0000256" key="4">
    <source>
        <dbReference type="SAM" id="MobiDB-lite"/>
    </source>
</evidence>
<evidence type="ECO:0000269" key="5">
    <source>
    </source>
</evidence>
<evidence type="ECO:0000303" key="6">
    <source>
    </source>
</evidence>
<evidence type="ECO:0000303" key="7">
    <source>
    </source>
</evidence>
<evidence type="ECO:0000305" key="8"/>
<dbReference type="EMBL" id="AK094619">
    <property type="protein sequence ID" value="BAC04386.1"/>
    <property type="molecule type" value="mRNA"/>
</dbReference>
<dbReference type="EMBL" id="AC055863">
    <property type="status" value="NOT_ANNOTATED_CDS"/>
    <property type="molecule type" value="Genomic_DNA"/>
</dbReference>
<dbReference type="EMBL" id="AC103809">
    <property type="status" value="NOT_ANNOTATED_CDS"/>
    <property type="molecule type" value="Genomic_DNA"/>
</dbReference>
<dbReference type="EMBL" id="CH471099">
    <property type="protein sequence ID" value="EAW89153.1"/>
    <property type="molecule type" value="Genomic_DNA"/>
</dbReference>
<dbReference type="EMBL" id="BC093631">
    <property type="protein sequence ID" value="AAH93631.1"/>
    <property type="molecule type" value="mRNA"/>
</dbReference>
<dbReference type="EMBL" id="BC104852">
    <property type="protein sequence ID" value="AAI04853.1"/>
    <property type="molecule type" value="mRNA"/>
</dbReference>
<dbReference type="EMBL" id="BC110989">
    <property type="protein sequence ID" value="AAI10990.1"/>
    <property type="molecule type" value="mRNA"/>
</dbReference>
<dbReference type="EMBL" id="BC143327">
    <property type="protein sequence ID" value="AAI43328.1"/>
    <property type="molecule type" value="mRNA"/>
</dbReference>
<dbReference type="CCDS" id="CCDS32718.2">
    <molecule id="Q2TAC6-1"/>
</dbReference>
<dbReference type="RefSeq" id="NP_694941.2">
    <molecule id="Q2TAC6-1"/>
    <property type="nucleotide sequence ID" value="NM_153209.4"/>
</dbReference>
<dbReference type="SMR" id="Q2TAC6"/>
<dbReference type="BioGRID" id="125878">
    <property type="interactions" value="7"/>
</dbReference>
<dbReference type="FunCoup" id="Q2TAC6">
    <property type="interactions" value="39"/>
</dbReference>
<dbReference type="IntAct" id="Q2TAC6">
    <property type="interactions" value="1"/>
</dbReference>
<dbReference type="MINT" id="Q2TAC6"/>
<dbReference type="STRING" id="9606.ENSP00000374566"/>
<dbReference type="GlyGen" id="Q2TAC6">
    <property type="glycosylation" value="1 site"/>
</dbReference>
<dbReference type="iPTMnet" id="Q2TAC6"/>
<dbReference type="PhosphoSitePlus" id="Q2TAC6"/>
<dbReference type="BioMuta" id="KIF19"/>
<dbReference type="DMDM" id="126215730"/>
<dbReference type="jPOST" id="Q2TAC6"/>
<dbReference type="MassIVE" id="Q2TAC6"/>
<dbReference type="PaxDb" id="9606-ENSP00000374566"/>
<dbReference type="PeptideAtlas" id="Q2TAC6"/>
<dbReference type="ProteomicsDB" id="61459">
    <molecule id="Q2TAC6-1"/>
</dbReference>
<dbReference type="ProteomicsDB" id="61460">
    <molecule id="Q2TAC6-2"/>
</dbReference>
<dbReference type="ProteomicsDB" id="61461">
    <molecule id="Q2TAC6-3"/>
</dbReference>
<dbReference type="Antibodypedia" id="31955">
    <property type="antibodies" value="84 antibodies from 20 providers"/>
</dbReference>
<dbReference type="DNASU" id="124602"/>
<dbReference type="Ensembl" id="ENST00000389916.5">
    <molecule id="Q2TAC6-1"/>
    <property type="protein sequence ID" value="ENSP00000374566.4"/>
    <property type="gene ID" value="ENSG00000196169.15"/>
</dbReference>
<dbReference type="GeneID" id="124602"/>
<dbReference type="KEGG" id="hsa:124602"/>
<dbReference type="MANE-Select" id="ENST00000389916.5">
    <property type="protein sequence ID" value="ENSP00000374566.4"/>
    <property type="RefSeq nucleotide sequence ID" value="NM_153209.4"/>
    <property type="RefSeq protein sequence ID" value="NP_694941.2"/>
</dbReference>
<dbReference type="UCSC" id="uc002jkm.4">
    <molecule id="Q2TAC6-1"/>
    <property type="organism name" value="human"/>
</dbReference>
<dbReference type="AGR" id="HGNC:26735"/>
<dbReference type="CTD" id="124602"/>
<dbReference type="DisGeNET" id="124602"/>
<dbReference type="GeneCards" id="KIF19"/>
<dbReference type="HGNC" id="HGNC:26735">
    <property type="gene designation" value="KIF19"/>
</dbReference>
<dbReference type="HPA" id="ENSG00000196169">
    <property type="expression patterns" value="Group enriched (brain, fallopian tube, lymphoid tissue)"/>
</dbReference>
<dbReference type="MalaCards" id="KIF19"/>
<dbReference type="MIM" id="619610">
    <property type="type" value="gene"/>
</dbReference>
<dbReference type="neXtProt" id="NX_Q2TAC6"/>
<dbReference type="OpenTargets" id="ENSG00000196169"/>
<dbReference type="PharmGKB" id="PA143485523"/>
<dbReference type="VEuPathDB" id="HostDB:ENSG00000196169"/>
<dbReference type="eggNOG" id="KOG0242">
    <property type="taxonomic scope" value="Eukaryota"/>
</dbReference>
<dbReference type="GeneTree" id="ENSGT00940000160989"/>
<dbReference type="HOGENOM" id="CLU_001485_15_0_1"/>
<dbReference type="InParanoid" id="Q2TAC6"/>
<dbReference type="OMA" id="GEQKQLC"/>
<dbReference type="OrthoDB" id="3176171at2759"/>
<dbReference type="PAN-GO" id="Q2TAC6">
    <property type="GO annotations" value="6 GO annotations based on evolutionary models"/>
</dbReference>
<dbReference type="PhylomeDB" id="Q2TAC6"/>
<dbReference type="TreeFam" id="TF331721"/>
<dbReference type="PathwayCommons" id="Q2TAC6"/>
<dbReference type="Reactome" id="R-HSA-6811434">
    <property type="pathway name" value="COPI-dependent Golgi-to-ER retrograde traffic"/>
</dbReference>
<dbReference type="Reactome" id="R-HSA-983189">
    <property type="pathway name" value="Kinesins"/>
</dbReference>
<dbReference type="SignaLink" id="Q2TAC6"/>
<dbReference type="SIGNOR" id="Q2TAC6"/>
<dbReference type="BioGRID-ORCS" id="124602">
    <property type="hits" value="14 hits in 1151 CRISPR screens"/>
</dbReference>
<dbReference type="ChiTaRS" id="KIF19">
    <property type="organism name" value="human"/>
</dbReference>
<dbReference type="GenomeRNAi" id="124602"/>
<dbReference type="Pharos" id="Q2TAC6">
    <property type="development level" value="Tbio"/>
</dbReference>
<dbReference type="PRO" id="PR:Q2TAC6"/>
<dbReference type="Proteomes" id="UP000005640">
    <property type="component" value="Chromosome 17"/>
</dbReference>
<dbReference type="RNAct" id="Q2TAC6">
    <property type="molecule type" value="protein"/>
</dbReference>
<dbReference type="Bgee" id="ENSG00000196169">
    <property type="expression patterns" value="Expressed in right uterine tube and 96 other cell types or tissues"/>
</dbReference>
<dbReference type="ExpressionAtlas" id="Q2TAC6">
    <property type="expression patterns" value="baseline and differential"/>
</dbReference>
<dbReference type="GO" id="GO:0005930">
    <property type="term" value="C:axoneme"/>
    <property type="evidence" value="ECO:0007669"/>
    <property type="project" value="GOC"/>
</dbReference>
<dbReference type="GO" id="GO:0005929">
    <property type="term" value="C:cilium"/>
    <property type="evidence" value="ECO:0000250"/>
    <property type="project" value="UniProtKB"/>
</dbReference>
<dbReference type="GO" id="GO:0005737">
    <property type="term" value="C:cytoplasm"/>
    <property type="evidence" value="ECO:0000318"/>
    <property type="project" value="GO_Central"/>
</dbReference>
<dbReference type="GO" id="GO:0005871">
    <property type="term" value="C:kinesin complex"/>
    <property type="evidence" value="ECO:0000318"/>
    <property type="project" value="GO_Central"/>
</dbReference>
<dbReference type="GO" id="GO:0005874">
    <property type="term" value="C:microtubule"/>
    <property type="evidence" value="ECO:0000318"/>
    <property type="project" value="GO_Central"/>
</dbReference>
<dbReference type="GO" id="GO:0005524">
    <property type="term" value="F:ATP binding"/>
    <property type="evidence" value="ECO:0007669"/>
    <property type="project" value="UniProtKB-KW"/>
</dbReference>
<dbReference type="GO" id="GO:0016887">
    <property type="term" value="F:ATP hydrolysis activity"/>
    <property type="evidence" value="ECO:0000318"/>
    <property type="project" value="GO_Central"/>
</dbReference>
<dbReference type="GO" id="GO:0008017">
    <property type="term" value="F:microtubule binding"/>
    <property type="evidence" value="ECO:0000318"/>
    <property type="project" value="GO_Central"/>
</dbReference>
<dbReference type="GO" id="GO:0003777">
    <property type="term" value="F:microtubule motor activity"/>
    <property type="evidence" value="ECO:0000318"/>
    <property type="project" value="GO_Central"/>
</dbReference>
<dbReference type="GO" id="GO:0008574">
    <property type="term" value="F:plus-end-directed microtubule motor activity"/>
    <property type="evidence" value="ECO:0000250"/>
    <property type="project" value="UniProtKB"/>
</dbReference>
<dbReference type="GO" id="GO:0060404">
    <property type="term" value="P:axonemal microtubule depolymerization"/>
    <property type="evidence" value="ECO:0000250"/>
    <property type="project" value="UniProtKB"/>
</dbReference>
<dbReference type="GO" id="GO:0007018">
    <property type="term" value="P:microtubule-based movement"/>
    <property type="evidence" value="ECO:0000318"/>
    <property type="project" value="GO_Central"/>
</dbReference>
<dbReference type="GO" id="GO:0070462">
    <property type="term" value="P:plus-end specific microtubule depolymerization"/>
    <property type="evidence" value="ECO:0000250"/>
    <property type="project" value="UniProtKB"/>
</dbReference>
<dbReference type="CDD" id="cd01370">
    <property type="entry name" value="KISc_KIP3_like"/>
    <property type="match status" value="1"/>
</dbReference>
<dbReference type="FunFam" id="3.40.850.10:FF:000037">
    <property type="entry name" value="kinesin-like protein KIF19"/>
    <property type="match status" value="1"/>
</dbReference>
<dbReference type="Gene3D" id="3.40.850.10">
    <property type="entry name" value="Kinesin motor domain"/>
    <property type="match status" value="1"/>
</dbReference>
<dbReference type="InterPro" id="IPR027640">
    <property type="entry name" value="Kinesin-like_fam"/>
</dbReference>
<dbReference type="InterPro" id="IPR019821">
    <property type="entry name" value="Kinesin_motor_CS"/>
</dbReference>
<dbReference type="InterPro" id="IPR001752">
    <property type="entry name" value="Kinesin_motor_dom"/>
</dbReference>
<dbReference type="InterPro" id="IPR036961">
    <property type="entry name" value="Kinesin_motor_dom_sf"/>
</dbReference>
<dbReference type="InterPro" id="IPR027417">
    <property type="entry name" value="P-loop_NTPase"/>
</dbReference>
<dbReference type="PANTHER" id="PTHR47968">
    <property type="entry name" value="CENTROMERE PROTEIN E"/>
    <property type="match status" value="1"/>
</dbReference>
<dbReference type="PANTHER" id="PTHR47968:SF69">
    <property type="entry name" value="KINESIN-LIKE PROTEIN"/>
    <property type="match status" value="1"/>
</dbReference>
<dbReference type="Pfam" id="PF00225">
    <property type="entry name" value="Kinesin"/>
    <property type="match status" value="1"/>
</dbReference>
<dbReference type="PRINTS" id="PR00380">
    <property type="entry name" value="KINESINHEAVY"/>
</dbReference>
<dbReference type="SMART" id="SM00129">
    <property type="entry name" value="KISc"/>
    <property type="match status" value="1"/>
</dbReference>
<dbReference type="SUPFAM" id="SSF52540">
    <property type="entry name" value="P-loop containing nucleoside triphosphate hydrolases"/>
    <property type="match status" value="1"/>
</dbReference>
<dbReference type="PROSITE" id="PS00411">
    <property type="entry name" value="KINESIN_MOTOR_1"/>
    <property type="match status" value="1"/>
</dbReference>
<dbReference type="PROSITE" id="PS50067">
    <property type="entry name" value="KINESIN_MOTOR_2"/>
    <property type="match status" value="1"/>
</dbReference>